<proteinExistence type="evidence at transcript level"/>
<protein>
    <recommendedName>
        <fullName>F-box only protein 8</fullName>
    </recommendedName>
</protein>
<sequence>MGQGLWRVARNHHLQQEAYSETGYLSREQSRRVASSNISHTSHRKQAQGGIDIYHLLKARKSKEQEGFINLEMLPPELSFTILSYLNATDLCLASCVWQDLANDELLWQGLCKSTWGHCSIYNKNPPLGFSFRKLYMQLDEGSLTFNANPEEGVSYFMSKGILDDSPKEIAKFIFCTRTLNWKKLRIYLDERRDVLDDLVTLHNFRNQFLPNALREFFRHIHAPEERGEYLETLITKFSHRFCACNPDLMRELGLSPDAVYVLCYSLILLSIDLTSPHVKNKMSKREFIRNTRRAAQNISEDFVGHLYDNIYLIGHVAA</sequence>
<accession>Q9QZN3</accession>
<accession>Q8JZY7</accession>
<name>FBX8_MOUSE</name>
<dbReference type="EMBL" id="AF176527">
    <property type="protein sequence ID" value="AAF09136.1"/>
    <property type="molecule type" value="mRNA"/>
</dbReference>
<dbReference type="EMBL" id="AK029989">
    <property type="protein sequence ID" value="BAC26720.1"/>
    <property type="molecule type" value="mRNA"/>
</dbReference>
<dbReference type="EMBL" id="AK078111">
    <property type="protein sequence ID" value="BAC37130.1"/>
    <property type="molecule type" value="mRNA"/>
</dbReference>
<dbReference type="EMBL" id="AK147748">
    <property type="protein sequence ID" value="BAE28112.1"/>
    <property type="molecule type" value="mRNA"/>
</dbReference>
<dbReference type="EMBL" id="CH466569">
    <property type="protein sequence ID" value="EDL28608.1"/>
    <property type="molecule type" value="Genomic_DNA"/>
</dbReference>
<dbReference type="EMBL" id="CH466569">
    <property type="protein sequence ID" value="EDL28609.1"/>
    <property type="molecule type" value="Genomic_DNA"/>
</dbReference>
<dbReference type="EMBL" id="BC034854">
    <property type="protein sequence ID" value="AAH34854.1"/>
    <property type="molecule type" value="mRNA"/>
</dbReference>
<dbReference type="CCDS" id="CCDS22314.1"/>
<dbReference type="RefSeq" id="NP_056606.2">
    <property type="nucleotide sequence ID" value="NM_015791.3"/>
</dbReference>
<dbReference type="SMR" id="Q9QZN3"/>
<dbReference type="FunCoup" id="Q9QZN3">
    <property type="interactions" value="96"/>
</dbReference>
<dbReference type="STRING" id="10090.ENSMUSP00000037544"/>
<dbReference type="PhosphoSitePlus" id="Q9QZN3"/>
<dbReference type="PaxDb" id="10090-ENSMUSP00000037544"/>
<dbReference type="ProteomicsDB" id="271887"/>
<dbReference type="Antibodypedia" id="1238">
    <property type="antibodies" value="239 antibodies from 25 providers"/>
</dbReference>
<dbReference type="Ensembl" id="ENSMUST00000040218.13">
    <property type="protein sequence ID" value="ENSMUSP00000037544.6"/>
    <property type="gene ID" value="ENSMUSG00000038206.14"/>
</dbReference>
<dbReference type="GeneID" id="50753"/>
<dbReference type="KEGG" id="mmu:50753"/>
<dbReference type="UCSC" id="uc009lsr.1">
    <property type="organism name" value="mouse"/>
</dbReference>
<dbReference type="AGR" id="MGI:1354696"/>
<dbReference type="CTD" id="26269"/>
<dbReference type="MGI" id="MGI:1354696">
    <property type="gene designation" value="Fbxo8"/>
</dbReference>
<dbReference type="VEuPathDB" id="HostDB:ENSMUSG00000038206"/>
<dbReference type="eggNOG" id="KOG0929">
    <property type="taxonomic scope" value="Eukaryota"/>
</dbReference>
<dbReference type="GeneTree" id="ENSGT00940000158356"/>
<dbReference type="HOGENOM" id="CLU_057531_0_0_1"/>
<dbReference type="InParanoid" id="Q9QZN3"/>
<dbReference type="OMA" id="NANPHEG"/>
<dbReference type="OrthoDB" id="430364at2759"/>
<dbReference type="PhylomeDB" id="Q9QZN3"/>
<dbReference type="BioGRID-ORCS" id="50753">
    <property type="hits" value="1 hit in 78 CRISPR screens"/>
</dbReference>
<dbReference type="ChiTaRS" id="Fbxo8">
    <property type="organism name" value="mouse"/>
</dbReference>
<dbReference type="PRO" id="PR:Q9QZN3"/>
<dbReference type="Proteomes" id="UP000000589">
    <property type="component" value="Chromosome 8"/>
</dbReference>
<dbReference type="RNAct" id="Q9QZN3">
    <property type="molecule type" value="protein"/>
</dbReference>
<dbReference type="Bgee" id="ENSMUSG00000038206">
    <property type="expression patterns" value="Expressed in secondary oocyte and 254 other cell types or tissues"/>
</dbReference>
<dbReference type="ExpressionAtlas" id="Q9QZN3">
    <property type="expression patterns" value="baseline and differential"/>
</dbReference>
<dbReference type="GO" id="GO:0000151">
    <property type="term" value="C:ubiquitin ligase complex"/>
    <property type="evidence" value="ECO:0000353"/>
    <property type="project" value="MGI"/>
</dbReference>
<dbReference type="GO" id="GO:0005085">
    <property type="term" value="F:guanyl-nucleotide exchange factor activity"/>
    <property type="evidence" value="ECO:0007669"/>
    <property type="project" value="UniProtKB-KW"/>
</dbReference>
<dbReference type="GO" id="GO:0032012">
    <property type="term" value="P:regulation of ARF protein signal transduction"/>
    <property type="evidence" value="ECO:0007669"/>
    <property type="project" value="InterPro"/>
</dbReference>
<dbReference type="GO" id="GO:0006511">
    <property type="term" value="P:ubiquitin-dependent protein catabolic process"/>
    <property type="evidence" value="ECO:0000353"/>
    <property type="project" value="MGI"/>
</dbReference>
<dbReference type="CDD" id="cd22088">
    <property type="entry name" value="F-box_FBXO8"/>
    <property type="match status" value="1"/>
</dbReference>
<dbReference type="CDD" id="cd00171">
    <property type="entry name" value="Sec7"/>
    <property type="match status" value="1"/>
</dbReference>
<dbReference type="FunFam" id="1.10.1000.11:FF:000008">
    <property type="entry name" value="F-box only protein 8"/>
    <property type="match status" value="1"/>
</dbReference>
<dbReference type="FunFam" id="1.10.220.20:FF:000006">
    <property type="entry name" value="F-box only protein 8"/>
    <property type="match status" value="1"/>
</dbReference>
<dbReference type="FunFam" id="1.20.1280.50:FF:000014">
    <property type="entry name" value="F-box only protein 8"/>
    <property type="match status" value="1"/>
</dbReference>
<dbReference type="Gene3D" id="1.10.220.20">
    <property type="match status" value="1"/>
</dbReference>
<dbReference type="Gene3D" id="1.20.1280.50">
    <property type="match status" value="1"/>
</dbReference>
<dbReference type="Gene3D" id="1.10.1000.11">
    <property type="entry name" value="Arf Nucleotide-binding Site Opener,domain 2"/>
    <property type="match status" value="1"/>
</dbReference>
<dbReference type="InterPro" id="IPR036047">
    <property type="entry name" value="F-box-like_dom_sf"/>
</dbReference>
<dbReference type="InterPro" id="IPR001810">
    <property type="entry name" value="F-box_dom"/>
</dbReference>
<dbReference type="InterPro" id="IPR048003">
    <property type="entry name" value="FBXO8_F-box"/>
</dbReference>
<dbReference type="InterPro" id="IPR023394">
    <property type="entry name" value="Sec7_C_sf"/>
</dbReference>
<dbReference type="InterPro" id="IPR000904">
    <property type="entry name" value="Sec7_dom"/>
</dbReference>
<dbReference type="InterPro" id="IPR035999">
    <property type="entry name" value="Sec7_dom_sf"/>
</dbReference>
<dbReference type="PANTHER" id="PTHR10663:SF372">
    <property type="entry name" value="F-BOX ONLY PROTEIN 8"/>
    <property type="match status" value="1"/>
</dbReference>
<dbReference type="PANTHER" id="PTHR10663">
    <property type="entry name" value="GUANYL-NUCLEOTIDE EXCHANGE FACTOR"/>
    <property type="match status" value="1"/>
</dbReference>
<dbReference type="Pfam" id="PF12937">
    <property type="entry name" value="F-box-like"/>
    <property type="match status" value="1"/>
</dbReference>
<dbReference type="Pfam" id="PF01369">
    <property type="entry name" value="Sec7"/>
    <property type="match status" value="1"/>
</dbReference>
<dbReference type="SMART" id="SM00222">
    <property type="entry name" value="Sec7"/>
    <property type="match status" value="1"/>
</dbReference>
<dbReference type="SUPFAM" id="SSF81383">
    <property type="entry name" value="F-box domain"/>
    <property type="match status" value="1"/>
</dbReference>
<dbReference type="SUPFAM" id="SSF48425">
    <property type="entry name" value="Sec7 domain"/>
    <property type="match status" value="1"/>
</dbReference>
<dbReference type="PROSITE" id="PS50181">
    <property type="entry name" value="FBOX"/>
    <property type="match status" value="1"/>
</dbReference>
<dbReference type="PROSITE" id="PS50190">
    <property type="entry name" value="SEC7"/>
    <property type="match status" value="1"/>
</dbReference>
<gene>
    <name type="primary">Fbxo8</name>
    <name type="synonym">Fbx8</name>
</gene>
<organism>
    <name type="scientific">Mus musculus</name>
    <name type="common">Mouse</name>
    <dbReference type="NCBI Taxonomy" id="10090"/>
    <lineage>
        <taxon>Eukaryota</taxon>
        <taxon>Metazoa</taxon>
        <taxon>Chordata</taxon>
        <taxon>Craniata</taxon>
        <taxon>Vertebrata</taxon>
        <taxon>Euteleostomi</taxon>
        <taxon>Mammalia</taxon>
        <taxon>Eutheria</taxon>
        <taxon>Euarchontoglires</taxon>
        <taxon>Glires</taxon>
        <taxon>Rodentia</taxon>
        <taxon>Myomorpha</taxon>
        <taxon>Muroidea</taxon>
        <taxon>Muridae</taxon>
        <taxon>Murinae</taxon>
        <taxon>Mus</taxon>
        <taxon>Mus</taxon>
    </lineage>
</organism>
<feature type="chain" id="PRO_0000120219" description="F-box only protein 8">
    <location>
        <begin position="1"/>
        <end position="319"/>
    </location>
</feature>
<feature type="domain" description="F-box" evidence="1">
    <location>
        <begin position="68"/>
        <end position="111"/>
    </location>
</feature>
<feature type="domain" description="SEC7" evidence="2">
    <location>
        <begin position="146"/>
        <end position="276"/>
    </location>
</feature>
<feature type="sequence conflict" description="In Ref. 1; AAF09136." evidence="3" ref="1">
    <original>T</original>
    <variation>I</variation>
    <location>
        <position position="89"/>
    </location>
</feature>
<evidence type="ECO:0000255" key="1">
    <source>
        <dbReference type="PROSITE-ProRule" id="PRU00080"/>
    </source>
</evidence>
<evidence type="ECO:0000255" key="2">
    <source>
        <dbReference type="PROSITE-ProRule" id="PRU00189"/>
    </source>
</evidence>
<evidence type="ECO:0000305" key="3"/>
<keyword id="KW-0344">Guanine-nucleotide releasing factor</keyword>
<keyword id="KW-1185">Reference proteome</keyword>
<reference key="1">
    <citation type="journal article" date="1999" name="Curr. Biol.">
        <title>A family of mammalian F-box proteins.</title>
        <authorList>
            <person name="Winston J.T."/>
            <person name="Koepp D.M."/>
            <person name="Zhu C."/>
            <person name="Elledge S.J."/>
            <person name="Harper J.W."/>
        </authorList>
    </citation>
    <scope>NUCLEOTIDE SEQUENCE [MRNA]</scope>
</reference>
<reference key="2">
    <citation type="journal article" date="2005" name="Science">
        <title>The transcriptional landscape of the mammalian genome.</title>
        <authorList>
            <person name="Carninci P."/>
            <person name="Kasukawa T."/>
            <person name="Katayama S."/>
            <person name="Gough J."/>
            <person name="Frith M.C."/>
            <person name="Maeda N."/>
            <person name="Oyama R."/>
            <person name="Ravasi T."/>
            <person name="Lenhard B."/>
            <person name="Wells C."/>
            <person name="Kodzius R."/>
            <person name="Shimokawa K."/>
            <person name="Bajic V.B."/>
            <person name="Brenner S.E."/>
            <person name="Batalov S."/>
            <person name="Forrest A.R."/>
            <person name="Zavolan M."/>
            <person name="Davis M.J."/>
            <person name="Wilming L.G."/>
            <person name="Aidinis V."/>
            <person name="Allen J.E."/>
            <person name="Ambesi-Impiombato A."/>
            <person name="Apweiler R."/>
            <person name="Aturaliya R.N."/>
            <person name="Bailey T.L."/>
            <person name="Bansal M."/>
            <person name="Baxter L."/>
            <person name="Beisel K.W."/>
            <person name="Bersano T."/>
            <person name="Bono H."/>
            <person name="Chalk A.M."/>
            <person name="Chiu K.P."/>
            <person name="Choudhary V."/>
            <person name="Christoffels A."/>
            <person name="Clutterbuck D.R."/>
            <person name="Crowe M.L."/>
            <person name="Dalla E."/>
            <person name="Dalrymple B.P."/>
            <person name="de Bono B."/>
            <person name="Della Gatta G."/>
            <person name="di Bernardo D."/>
            <person name="Down T."/>
            <person name="Engstrom P."/>
            <person name="Fagiolini M."/>
            <person name="Faulkner G."/>
            <person name="Fletcher C.F."/>
            <person name="Fukushima T."/>
            <person name="Furuno M."/>
            <person name="Futaki S."/>
            <person name="Gariboldi M."/>
            <person name="Georgii-Hemming P."/>
            <person name="Gingeras T.R."/>
            <person name="Gojobori T."/>
            <person name="Green R.E."/>
            <person name="Gustincich S."/>
            <person name="Harbers M."/>
            <person name="Hayashi Y."/>
            <person name="Hensch T.K."/>
            <person name="Hirokawa N."/>
            <person name="Hill D."/>
            <person name="Huminiecki L."/>
            <person name="Iacono M."/>
            <person name="Ikeo K."/>
            <person name="Iwama A."/>
            <person name="Ishikawa T."/>
            <person name="Jakt M."/>
            <person name="Kanapin A."/>
            <person name="Katoh M."/>
            <person name="Kawasawa Y."/>
            <person name="Kelso J."/>
            <person name="Kitamura H."/>
            <person name="Kitano H."/>
            <person name="Kollias G."/>
            <person name="Krishnan S.P."/>
            <person name="Kruger A."/>
            <person name="Kummerfeld S.K."/>
            <person name="Kurochkin I.V."/>
            <person name="Lareau L.F."/>
            <person name="Lazarevic D."/>
            <person name="Lipovich L."/>
            <person name="Liu J."/>
            <person name="Liuni S."/>
            <person name="McWilliam S."/>
            <person name="Madan Babu M."/>
            <person name="Madera M."/>
            <person name="Marchionni L."/>
            <person name="Matsuda H."/>
            <person name="Matsuzawa S."/>
            <person name="Miki H."/>
            <person name="Mignone F."/>
            <person name="Miyake S."/>
            <person name="Morris K."/>
            <person name="Mottagui-Tabar S."/>
            <person name="Mulder N."/>
            <person name="Nakano N."/>
            <person name="Nakauchi H."/>
            <person name="Ng P."/>
            <person name="Nilsson R."/>
            <person name="Nishiguchi S."/>
            <person name="Nishikawa S."/>
            <person name="Nori F."/>
            <person name="Ohara O."/>
            <person name="Okazaki Y."/>
            <person name="Orlando V."/>
            <person name="Pang K.C."/>
            <person name="Pavan W.J."/>
            <person name="Pavesi G."/>
            <person name="Pesole G."/>
            <person name="Petrovsky N."/>
            <person name="Piazza S."/>
            <person name="Reed J."/>
            <person name="Reid J.F."/>
            <person name="Ring B.Z."/>
            <person name="Ringwald M."/>
            <person name="Rost B."/>
            <person name="Ruan Y."/>
            <person name="Salzberg S.L."/>
            <person name="Sandelin A."/>
            <person name="Schneider C."/>
            <person name="Schoenbach C."/>
            <person name="Sekiguchi K."/>
            <person name="Semple C.A."/>
            <person name="Seno S."/>
            <person name="Sessa L."/>
            <person name="Sheng Y."/>
            <person name="Shibata Y."/>
            <person name="Shimada H."/>
            <person name="Shimada K."/>
            <person name="Silva D."/>
            <person name="Sinclair B."/>
            <person name="Sperling S."/>
            <person name="Stupka E."/>
            <person name="Sugiura K."/>
            <person name="Sultana R."/>
            <person name="Takenaka Y."/>
            <person name="Taki K."/>
            <person name="Tammoja K."/>
            <person name="Tan S.L."/>
            <person name="Tang S."/>
            <person name="Taylor M.S."/>
            <person name="Tegner J."/>
            <person name="Teichmann S.A."/>
            <person name="Ueda H.R."/>
            <person name="van Nimwegen E."/>
            <person name="Verardo R."/>
            <person name="Wei C.L."/>
            <person name="Yagi K."/>
            <person name="Yamanishi H."/>
            <person name="Zabarovsky E."/>
            <person name="Zhu S."/>
            <person name="Zimmer A."/>
            <person name="Hide W."/>
            <person name="Bult C."/>
            <person name="Grimmond S.M."/>
            <person name="Teasdale R.D."/>
            <person name="Liu E.T."/>
            <person name="Brusic V."/>
            <person name="Quackenbush J."/>
            <person name="Wahlestedt C."/>
            <person name="Mattick J.S."/>
            <person name="Hume D.A."/>
            <person name="Kai C."/>
            <person name="Sasaki D."/>
            <person name="Tomaru Y."/>
            <person name="Fukuda S."/>
            <person name="Kanamori-Katayama M."/>
            <person name="Suzuki M."/>
            <person name="Aoki J."/>
            <person name="Arakawa T."/>
            <person name="Iida J."/>
            <person name="Imamura K."/>
            <person name="Itoh M."/>
            <person name="Kato T."/>
            <person name="Kawaji H."/>
            <person name="Kawagashira N."/>
            <person name="Kawashima T."/>
            <person name="Kojima M."/>
            <person name="Kondo S."/>
            <person name="Konno H."/>
            <person name="Nakano K."/>
            <person name="Ninomiya N."/>
            <person name="Nishio T."/>
            <person name="Okada M."/>
            <person name="Plessy C."/>
            <person name="Shibata K."/>
            <person name="Shiraki T."/>
            <person name="Suzuki S."/>
            <person name="Tagami M."/>
            <person name="Waki K."/>
            <person name="Watahiki A."/>
            <person name="Okamura-Oho Y."/>
            <person name="Suzuki H."/>
            <person name="Kawai J."/>
            <person name="Hayashizaki Y."/>
        </authorList>
    </citation>
    <scope>NUCLEOTIDE SEQUENCE [LARGE SCALE MRNA]</scope>
    <source>
        <strain>C57BL/6J</strain>
        <tissue>Medulla oblongata</tissue>
        <tissue>Testis</tissue>
    </source>
</reference>
<reference key="3">
    <citation type="submission" date="2005-07" db="EMBL/GenBank/DDBJ databases">
        <authorList>
            <person name="Mural R.J."/>
            <person name="Adams M.D."/>
            <person name="Myers E.W."/>
            <person name="Smith H.O."/>
            <person name="Venter J.C."/>
        </authorList>
    </citation>
    <scope>NUCLEOTIDE SEQUENCE [LARGE SCALE GENOMIC DNA]</scope>
</reference>
<reference key="4">
    <citation type="journal article" date="2004" name="Genome Res.">
        <title>The status, quality, and expansion of the NIH full-length cDNA project: the Mammalian Gene Collection (MGC).</title>
        <authorList>
            <consortium name="The MGC Project Team"/>
        </authorList>
    </citation>
    <scope>NUCLEOTIDE SEQUENCE [LARGE SCALE MRNA]</scope>
    <source>
        <tissue>Mammary gland</tissue>
    </source>
</reference>
<comment type="function">
    <text evidence="3">May promote guanine-nucleotide exchange on an ARF. Promotes the activation of ARF through replacement of GDP with GTP (Potential).</text>
</comment>
<comment type="tissue specificity">
    <text>High expression in brain, heart, kidney, liver, lung, skeletal muscle, testis, and day-7 embryos.</text>
</comment>